<organism>
    <name type="scientific">Danio rerio</name>
    <name type="common">Zebrafish</name>
    <name type="synonym">Brachydanio rerio</name>
    <dbReference type="NCBI Taxonomy" id="7955"/>
    <lineage>
        <taxon>Eukaryota</taxon>
        <taxon>Metazoa</taxon>
        <taxon>Chordata</taxon>
        <taxon>Craniata</taxon>
        <taxon>Vertebrata</taxon>
        <taxon>Euteleostomi</taxon>
        <taxon>Actinopterygii</taxon>
        <taxon>Neopterygii</taxon>
        <taxon>Teleostei</taxon>
        <taxon>Ostariophysi</taxon>
        <taxon>Cypriniformes</taxon>
        <taxon>Danionidae</taxon>
        <taxon>Danioninae</taxon>
        <taxon>Danio</taxon>
    </lineage>
</organism>
<proteinExistence type="evidence at transcript level"/>
<feature type="chain" id="PRO_0000315738" description="Protein SPT2 homolog">
    <location>
        <begin position="1"/>
        <end position="629"/>
    </location>
</feature>
<feature type="region of interest" description="Important for interaction with DNA" evidence="2">
    <location>
        <begin position="1"/>
        <end position="522"/>
    </location>
</feature>
<feature type="region of interest" description="Disordered" evidence="4">
    <location>
        <begin position="53"/>
        <end position="181"/>
    </location>
</feature>
<feature type="region of interest" description="Disordered" evidence="4">
    <location>
        <begin position="206"/>
        <end position="533"/>
    </location>
</feature>
<feature type="region of interest" description="Important for interaction with histones" evidence="2">
    <location>
        <begin position="523"/>
        <end position="629"/>
    </location>
</feature>
<feature type="region of interest" description="Disordered" evidence="4">
    <location>
        <begin position="608"/>
        <end position="629"/>
    </location>
</feature>
<feature type="coiled-coil region" evidence="3">
    <location>
        <begin position="45"/>
        <end position="72"/>
    </location>
</feature>
<feature type="coiled-coil region" evidence="3">
    <location>
        <begin position="203"/>
        <end position="228"/>
    </location>
</feature>
<feature type="coiled-coil region" evidence="3">
    <location>
        <begin position="591"/>
        <end position="629"/>
    </location>
</feature>
<feature type="compositionally biased region" description="Basic and acidic residues" evidence="4">
    <location>
        <begin position="53"/>
        <end position="93"/>
    </location>
</feature>
<feature type="compositionally biased region" description="Polar residues" evidence="4">
    <location>
        <begin position="111"/>
        <end position="123"/>
    </location>
</feature>
<feature type="compositionally biased region" description="Acidic residues" evidence="4">
    <location>
        <begin position="127"/>
        <end position="144"/>
    </location>
</feature>
<feature type="compositionally biased region" description="Basic and acidic residues" evidence="4">
    <location>
        <begin position="206"/>
        <end position="247"/>
    </location>
</feature>
<feature type="compositionally biased region" description="Basic and acidic residues" evidence="4">
    <location>
        <begin position="257"/>
        <end position="277"/>
    </location>
</feature>
<feature type="compositionally biased region" description="Polar residues" evidence="4">
    <location>
        <begin position="278"/>
        <end position="297"/>
    </location>
</feature>
<feature type="compositionally biased region" description="Polar residues" evidence="4">
    <location>
        <begin position="305"/>
        <end position="327"/>
    </location>
</feature>
<feature type="compositionally biased region" description="Polar residues" evidence="4">
    <location>
        <begin position="335"/>
        <end position="345"/>
    </location>
</feature>
<feature type="compositionally biased region" description="Polar residues" evidence="4">
    <location>
        <begin position="353"/>
        <end position="364"/>
    </location>
</feature>
<feature type="compositionally biased region" description="Polar residues" evidence="4">
    <location>
        <begin position="387"/>
        <end position="398"/>
    </location>
</feature>
<feature type="compositionally biased region" description="Polar residues" evidence="4">
    <location>
        <begin position="437"/>
        <end position="450"/>
    </location>
</feature>
<feature type="compositionally biased region" description="Polar residues" evidence="4">
    <location>
        <begin position="462"/>
        <end position="490"/>
    </location>
</feature>
<feature type="splice variant" id="VSP_030691" description="In isoform 2." evidence="5">
    <location>
        <begin position="63"/>
        <end position="204"/>
    </location>
</feature>
<feature type="sequence conflict" description="In Ref. 1; AAH95563." evidence="6" ref="1">
    <original>S</original>
    <variation>A</variation>
    <location>
        <position position="41"/>
    </location>
</feature>
<protein>
    <recommendedName>
        <fullName>Protein SPT2 homolog</fullName>
    </recommendedName>
    <alternativeName>
        <fullName>SPT2 domain-containing protein 1</fullName>
    </alternativeName>
</protein>
<comment type="function">
    <text evidence="1 2">Histone chaperone that stabilizes pre-existing histone tetramers and regulates replication-independent histone exchange on chromatin. Required for normal chromatin refolding in the coding region of transcribed genes, and for the suppression of spurious transcription. Binds DNA and histones and promotes nucleosome assembly (in vitro). Facilitates formation of tetrameric histone complexes containing histone H3 and H4 (By similarity). Modulates RNA polymerase 1-mediated transcription (By similarity). Binds DNA, with a preference for branched DNA species, such as Y-form DNA and Holliday junction DNA (By similarity).</text>
</comment>
<comment type="subunit">
    <text evidence="2">Interacts with histones. Interacts with a heterotetrameric complex formed by histone H3 and H4, especially when the histone tetramer is not bound to DNA.</text>
</comment>
<comment type="subcellular location">
    <subcellularLocation>
        <location evidence="1">Nucleus</location>
        <location evidence="1">Nucleolus</location>
    </subcellularLocation>
</comment>
<comment type="alternative products">
    <event type="alternative splicing"/>
    <isoform>
        <id>Q6DGN6-1</id>
        <name>1</name>
        <sequence type="displayed"/>
    </isoform>
    <isoform>
        <id>Q6DGN6-2</id>
        <name>2</name>
        <sequence type="described" ref="VSP_030691"/>
    </isoform>
</comment>
<comment type="domain">
    <text evidence="2">The acidic C-terminal domain mediates interaction with histone H3/H4 complexes.</text>
</comment>
<comment type="similarity">
    <text evidence="6">Belongs to the SPT2 family.</text>
</comment>
<comment type="sequence caution" evidence="6">
    <conflict type="miscellaneous discrepancy">
        <sequence resource="EMBL-CDS" id="AAH76305"/>
    </conflict>
    <text>Contaminating sequence. Potential poly-A sequence.</text>
</comment>
<accession>Q6DGN6</accession>
<accession>Q502T7</accession>
<evidence type="ECO:0000250" key="1">
    <source>
        <dbReference type="UniProtKB" id="E1BUG7"/>
    </source>
</evidence>
<evidence type="ECO:0000250" key="2">
    <source>
        <dbReference type="UniProtKB" id="Q68D10"/>
    </source>
</evidence>
<evidence type="ECO:0000255" key="3"/>
<evidence type="ECO:0000256" key="4">
    <source>
        <dbReference type="SAM" id="MobiDB-lite"/>
    </source>
</evidence>
<evidence type="ECO:0000303" key="5">
    <source ref="1"/>
</evidence>
<evidence type="ECO:0000305" key="6"/>
<dbReference type="EMBL" id="BC076305">
    <property type="protein sequence ID" value="AAH76305.1"/>
    <property type="status" value="ALT_SEQ"/>
    <property type="molecule type" value="mRNA"/>
</dbReference>
<dbReference type="EMBL" id="BC095563">
    <property type="protein sequence ID" value="AAH95563.1"/>
    <property type="molecule type" value="mRNA"/>
</dbReference>
<dbReference type="SMR" id="Q6DGN6"/>
<dbReference type="FunCoup" id="Q6DGN6">
    <property type="interactions" value="1027"/>
</dbReference>
<dbReference type="STRING" id="7955.ENSDARP00000068017"/>
<dbReference type="PaxDb" id="7955-ENSDARP00000068017"/>
<dbReference type="AGR" id="ZFIN:ZDB-GENE-050522-212"/>
<dbReference type="ZFIN" id="ZDB-GENE-050522-212">
    <property type="gene designation" value="spty2d1"/>
</dbReference>
<dbReference type="eggNOG" id="ENOG502QWHS">
    <property type="taxonomic scope" value="Eukaryota"/>
</dbReference>
<dbReference type="InParanoid" id="Q6DGN6"/>
<dbReference type="PhylomeDB" id="Q6DGN6"/>
<dbReference type="PRO" id="PR:Q6DGN6"/>
<dbReference type="Proteomes" id="UP000000437">
    <property type="component" value="Unplaced"/>
</dbReference>
<dbReference type="GO" id="GO:0005730">
    <property type="term" value="C:nucleolus"/>
    <property type="evidence" value="ECO:0000250"/>
    <property type="project" value="UniProtKB"/>
</dbReference>
<dbReference type="GO" id="GO:0003677">
    <property type="term" value="F:DNA binding"/>
    <property type="evidence" value="ECO:0000250"/>
    <property type="project" value="UniProtKB"/>
</dbReference>
<dbReference type="GO" id="GO:0042393">
    <property type="term" value="F:histone binding"/>
    <property type="evidence" value="ECO:0000250"/>
    <property type="project" value="UniProtKB"/>
</dbReference>
<dbReference type="GO" id="GO:0140713">
    <property type="term" value="F:histone chaperone activity"/>
    <property type="evidence" value="ECO:0000250"/>
    <property type="project" value="UniProtKB"/>
</dbReference>
<dbReference type="GO" id="GO:0001042">
    <property type="term" value="F:RNA polymerase I core binding"/>
    <property type="evidence" value="ECO:0000250"/>
    <property type="project" value="UniProtKB"/>
</dbReference>
<dbReference type="GO" id="GO:0031507">
    <property type="term" value="P:heterochromatin formation"/>
    <property type="evidence" value="ECO:0000250"/>
    <property type="project" value="UniProtKB"/>
</dbReference>
<dbReference type="GO" id="GO:0006334">
    <property type="term" value="P:nucleosome assembly"/>
    <property type="evidence" value="ECO:0000250"/>
    <property type="project" value="UniProtKB"/>
</dbReference>
<dbReference type="GO" id="GO:0006355">
    <property type="term" value="P:regulation of DNA-templated transcription"/>
    <property type="evidence" value="ECO:0000250"/>
    <property type="project" value="UniProtKB"/>
</dbReference>
<dbReference type="GO" id="GO:0006360">
    <property type="term" value="P:transcription by RNA polymerase I"/>
    <property type="evidence" value="ECO:0000318"/>
    <property type="project" value="GO_Central"/>
</dbReference>
<dbReference type="InterPro" id="IPR013256">
    <property type="entry name" value="Chromatin_SPT2"/>
</dbReference>
<dbReference type="InterPro" id="IPR054552">
    <property type="entry name" value="SPT2_N"/>
</dbReference>
<dbReference type="PANTHER" id="PTHR22691:SF8">
    <property type="entry name" value="PROTEIN SPT2 HOMOLOG"/>
    <property type="match status" value="1"/>
</dbReference>
<dbReference type="PANTHER" id="PTHR22691">
    <property type="entry name" value="YEAST SPT2-RELATED"/>
    <property type="match status" value="1"/>
</dbReference>
<dbReference type="Pfam" id="PF08243">
    <property type="entry name" value="SPT2"/>
    <property type="match status" value="1"/>
</dbReference>
<dbReference type="Pfam" id="PF22878">
    <property type="entry name" value="SPT2_N"/>
    <property type="match status" value="1"/>
</dbReference>
<dbReference type="SMART" id="SM00784">
    <property type="entry name" value="SPT2"/>
    <property type="match status" value="1"/>
</dbReference>
<reference key="1">
    <citation type="submission" date="2004-07" db="EMBL/GenBank/DDBJ databases">
        <authorList>
            <consortium name="NIH - Zebrafish Gene Collection (ZGC) project"/>
        </authorList>
    </citation>
    <scope>NUCLEOTIDE SEQUENCE [LARGE SCALE MRNA] (ISOFORMS 1 AND 2)</scope>
    <source>
        <tissue>Brain</tissue>
    </source>
</reference>
<name>SPT2_DANRE</name>
<sequence length="629" mass="69438">MDFDSVLSIASQNQGLSSLPKRYSLKTGPPKKDLKVGGVNSAAVQAFLKKKAVEQKNKEQQDKKAKEDLLAKRVELKSDRKARAMASRTKDNFRGYNGIPVIDQPKKRQSKGSSTEEQQSSTKYEGGDYDDEDNFDYEGTDSESEPSRPVKPQAISRPEYSNRVENKPKKLSAPARPASSSMNFADLLKLAEKKQFEPVELKVVKKTEERLRTAEEIRELEMERRVKKLDKGKDVRSDKNSGQKDSRSQTSSNPQKKHVDRDGKNGRFPRPSEEKHQSSSTSKKPKLQASSERTPTSAKLHGDRSNSGSSGALNSKSAMKNGASFQAKQAPPRPSQGQRPATPSDLTPRKGNVSLTQAKSSISGSCPPGAARPGQGPHKNSAHGRPSNFSTSGPSQKPANPGKLSRPGSNAPPRPGGSGVVRPFTGDPSKQPRPGGNLQSQQFPGSSRASLNGPKRMERGVSGSQINRMSSGPGRSQCTVVSETISTKNITPRPGMVQRPPGPQGPRTVIGPSGHRILVKPSGPALPPITSSYKRKFEDEEEYDSEMDDFIDDEGEDQDEISKHIREIFGYDKNKYKDESDYALKFMESSWKEQQKEEARSLRMAVLEDEEEERRELEEMQRKNAKKRK</sequence>
<gene>
    <name type="primary">spty2d1</name>
    <name type="ORF">zgc:111826</name>
</gene>
<keyword id="KW-0025">Alternative splicing</keyword>
<keyword id="KW-0175">Coiled coil</keyword>
<keyword id="KW-0238">DNA-binding</keyword>
<keyword id="KW-0539">Nucleus</keyword>
<keyword id="KW-1185">Reference proteome</keyword>
<keyword id="KW-0804">Transcription</keyword>
<keyword id="KW-0805">Transcription regulation</keyword>